<comment type="function">
    <text evidence="9">Has a role in early neural and epidermal development; neuroblast movements during closure of the gastrulation cleft and epidermal morphogenesis. Vab-1 and ptp-3 may function redundantly within the same sets of neuronal precursors.</text>
</comment>
<comment type="catalytic activity">
    <reaction evidence="2 7">
        <text>O-phospho-L-tyrosyl-[protein] + H2O = L-tyrosyl-[protein] + phosphate</text>
        <dbReference type="Rhea" id="RHEA:10684"/>
        <dbReference type="Rhea" id="RHEA-COMP:10136"/>
        <dbReference type="Rhea" id="RHEA-COMP:20101"/>
        <dbReference type="ChEBI" id="CHEBI:15377"/>
        <dbReference type="ChEBI" id="CHEBI:43474"/>
        <dbReference type="ChEBI" id="CHEBI:46858"/>
        <dbReference type="ChEBI" id="CHEBI:61978"/>
        <dbReference type="EC" id="3.1.3.48"/>
    </reaction>
</comment>
<comment type="subcellular location">
    <subcellularLocation>
        <location>Cell junction</location>
        <location>Adherens junction</location>
    </subcellularLocation>
    <subcellularLocation>
        <location>Cell membrane</location>
        <topology>Single-pass type I membrane protein</topology>
    </subcellularLocation>
</comment>
<comment type="alternative products">
    <event type="alternative splicing"/>
    <isoform>
        <id>Q9BMN8-1</id>
        <name evidence="9">a</name>
        <name>ptp-3a</name>
        <sequence type="displayed"/>
    </isoform>
    <isoform>
        <id>Q9BMN8-2</id>
        <name evidence="9">b</name>
        <name>ptp-3b</name>
        <sequence type="described" ref="VSP_007007 VSP_007008"/>
    </isoform>
</comment>
<comment type="tissue specificity">
    <text evidence="9">Both isoforms are ubiquitously expressed in early embryos. In later embryos, larvae and adults expression is highest in the nerve ring, dorsal cord, ventral cord and epithelial tissues.</text>
</comment>
<comment type="similarity">
    <text evidence="12">Belongs to the protein-tyrosine phosphatase family. Receptor class 2A subfamily.</text>
</comment>
<dbReference type="EC" id="3.1.3.48"/>
<dbReference type="EMBL" id="AF316539">
    <property type="protein sequence ID" value="AAK01632.1"/>
    <property type="molecule type" value="mRNA"/>
</dbReference>
<dbReference type="EMBL" id="AF316540">
    <property type="protein sequence ID" value="AAK01633.1"/>
    <property type="molecule type" value="mRNA"/>
</dbReference>
<dbReference type="EMBL" id="Z46811">
    <property type="protein sequence ID" value="CAA86842.3"/>
    <property type="status" value="ALT_SEQ"/>
    <property type="molecule type" value="Genomic_DNA"/>
</dbReference>
<dbReference type="EMBL" id="Z49938">
    <property type="protein sequence ID" value="CAA86842.3"/>
    <property type="status" value="JOINED"/>
    <property type="molecule type" value="Genomic_DNA"/>
</dbReference>
<dbReference type="EMBL" id="Z49938">
    <property type="protein sequence ID" value="CAA90189.3"/>
    <property type="status" value="ALT_SEQ"/>
    <property type="molecule type" value="Genomic_DNA"/>
</dbReference>
<dbReference type="EMBL" id="Z46811">
    <property type="protein sequence ID" value="CAA90189.3"/>
    <property type="status" value="JOINED"/>
    <property type="molecule type" value="Genomic_DNA"/>
</dbReference>
<dbReference type="EMBL" id="Z49938">
    <property type="protein sequence ID" value="CAD31752.1"/>
    <property type="status" value="ALT_SEQ"/>
    <property type="molecule type" value="Genomic_DNA"/>
</dbReference>
<dbReference type="EMBL" id="Z46811">
    <property type="protein sequence ID" value="CAD31752.1"/>
    <property type="status" value="JOINED"/>
    <property type="molecule type" value="Genomic_DNA"/>
</dbReference>
<dbReference type="EMBL" id="Z46811">
    <property type="protein sequence ID" value="CAD31753.1"/>
    <property type="status" value="ALT_SEQ"/>
    <property type="molecule type" value="Genomic_DNA"/>
</dbReference>
<dbReference type="EMBL" id="Z49938">
    <property type="protein sequence ID" value="CAD31753.1"/>
    <property type="status" value="JOINED"/>
    <property type="molecule type" value="Genomic_DNA"/>
</dbReference>
<dbReference type="PIR" id="T19121">
    <property type="entry name" value="T19121"/>
</dbReference>
<dbReference type="RefSeq" id="NP_001021942.1">
    <property type="nucleotide sequence ID" value="NM_001026771.2"/>
</dbReference>
<dbReference type="RefSeq" id="NP_001021943.1">
    <property type="nucleotide sequence ID" value="NM_001026772.3"/>
</dbReference>
<dbReference type="RefSeq" id="NP_001293468.1">
    <property type="nucleotide sequence ID" value="NM_001306539.1"/>
</dbReference>
<dbReference type="RefSeq" id="NP_001293469.1">
    <property type="nucleotide sequence ID" value="NM_001306540.1"/>
</dbReference>
<dbReference type="SMR" id="Q9BMN8"/>
<dbReference type="BioGRID" id="39995">
    <property type="interactions" value="9"/>
</dbReference>
<dbReference type="FunCoup" id="Q9BMN8">
    <property type="interactions" value="1501"/>
</dbReference>
<dbReference type="STRING" id="6239.C09D8.1j.1"/>
<dbReference type="GlyCosmos" id="Q9BMN8">
    <property type="glycosylation" value="11 sites, No reported glycans"/>
</dbReference>
<dbReference type="iPTMnet" id="Q9BMN8"/>
<dbReference type="PaxDb" id="6239-C09D8.1j"/>
<dbReference type="PeptideAtlas" id="Q9BMN8"/>
<dbReference type="EnsemblMetazoa" id="C09D8.1a.1">
    <property type="protein sequence ID" value="C09D8.1a.1"/>
    <property type="gene ID" value="WBGene00004215"/>
</dbReference>
<dbReference type="EnsemblMetazoa" id="C09D8.1b.1">
    <property type="protein sequence ID" value="C09D8.1b.1"/>
    <property type="gene ID" value="WBGene00004215"/>
</dbReference>
<dbReference type="GeneID" id="174685"/>
<dbReference type="KEGG" id="cel:CELE_C09D8.1"/>
<dbReference type="UCSC" id="C09D8.1d">
    <molecule id="Q9BMN8-1"/>
    <property type="organism name" value="c. elegans"/>
</dbReference>
<dbReference type="AGR" id="WB:WBGene00004215"/>
<dbReference type="CTD" id="174685"/>
<dbReference type="WormBase" id="C09D8.1a">
    <property type="protein sequence ID" value="CE30244"/>
    <property type="gene ID" value="WBGene00004215"/>
    <property type="gene designation" value="ptp-3"/>
</dbReference>
<dbReference type="WormBase" id="C09D8.1b">
    <property type="protein sequence ID" value="CE30245"/>
    <property type="gene ID" value="WBGene00004215"/>
    <property type="gene designation" value="ptp-3"/>
</dbReference>
<dbReference type="eggNOG" id="KOG4228">
    <property type="taxonomic scope" value="Eukaryota"/>
</dbReference>
<dbReference type="InParanoid" id="Q9BMN8"/>
<dbReference type="OrthoDB" id="10253954at2759"/>
<dbReference type="PhylomeDB" id="Q9BMN8"/>
<dbReference type="Reactome" id="R-CEL-375165">
    <property type="pathway name" value="NCAM signaling for neurite out-growth"/>
</dbReference>
<dbReference type="Reactome" id="R-CEL-388844">
    <property type="pathway name" value="Receptor-type tyrosine-protein phosphatases"/>
</dbReference>
<dbReference type="Reactome" id="R-CEL-416700">
    <property type="pathway name" value="Other semaphorin interactions"/>
</dbReference>
<dbReference type="Reactome" id="R-CEL-5673001">
    <property type="pathway name" value="RAF/MAP kinase cascade"/>
</dbReference>
<dbReference type="Reactome" id="R-CEL-6798695">
    <property type="pathway name" value="Neutrophil degranulation"/>
</dbReference>
<dbReference type="Reactome" id="R-CEL-8849932">
    <property type="pathway name" value="Synaptic adhesion-like molecules"/>
</dbReference>
<dbReference type="PRO" id="PR:Q9BMN8"/>
<dbReference type="Proteomes" id="UP000001940">
    <property type="component" value="Chromosome II"/>
</dbReference>
<dbReference type="Bgee" id="WBGene00004215">
    <property type="expression patterns" value="Expressed in pharyngeal muscle cell (C elegans) and 4 other cell types or tissues"/>
</dbReference>
<dbReference type="ExpressionAtlas" id="Q9BMN8">
    <property type="expression patterns" value="baseline and differential"/>
</dbReference>
<dbReference type="GO" id="GO:0005912">
    <property type="term" value="C:adherens junction"/>
    <property type="evidence" value="ECO:0000314"/>
    <property type="project" value="WormBase"/>
</dbReference>
<dbReference type="GO" id="GO:0005886">
    <property type="term" value="C:plasma membrane"/>
    <property type="evidence" value="ECO:0007669"/>
    <property type="project" value="UniProtKB-SubCell"/>
</dbReference>
<dbReference type="GO" id="GO:0045202">
    <property type="term" value="C:synapse"/>
    <property type="evidence" value="ECO:0000314"/>
    <property type="project" value="WormBase"/>
</dbReference>
<dbReference type="GO" id="GO:0004725">
    <property type="term" value="F:protein tyrosine phosphatase activity"/>
    <property type="evidence" value="ECO:0000314"/>
    <property type="project" value="WormBase"/>
</dbReference>
<dbReference type="GO" id="GO:0005001">
    <property type="term" value="F:transmembrane receptor protein tyrosine phosphatase activity"/>
    <property type="evidence" value="ECO:0000250"/>
    <property type="project" value="WormBase"/>
</dbReference>
<dbReference type="GO" id="GO:0010172">
    <property type="term" value="P:embryonic body morphogenesis"/>
    <property type="evidence" value="ECO:0000315"/>
    <property type="project" value="UniProtKB"/>
</dbReference>
<dbReference type="GO" id="GO:0008544">
    <property type="term" value="P:epidermis development"/>
    <property type="evidence" value="ECO:0000315"/>
    <property type="project" value="WormBase"/>
</dbReference>
<dbReference type="GO" id="GO:0007369">
    <property type="term" value="P:gastrulation"/>
    <property type="evidence" value="ECO:0000315"/>
    <property type="project" value="WormBase"/>
</dbReference>
<dbReference type="GO" id="GO:0008045">
    <property type="term" value="P:motor neuron axon guidance"/>
    <property type="evidence" value="ECO:0000315"/>
    <property type="project" value="WormBase"/>
</dbReference>
<dbReference type="GO" id="GO:0007399">
    <property type="term" value="P:nervous system development"/>
    <property type="evidence" value="ECO:0000315"/>
    <property type="project" value="UniProtKB"/>
</dbReference>
<dbReference type="GO" id="GO:0097402">
    <property type="term" value="P:neuroblast migration"/>
    <property type="evidence" value="ECO:0000315"/>
    <property type="project" value="WormBase"/>
</dbReference>
<dbReference type="GO" id="GO:0001764">
    <property type="term" value="P:neuron migration"/>
    <property type="evidence" value="ECO:0000315"/>
    <property type="project" value="WormBase"/>
</dbReference>
<dbReference type="GO" id="GO:0035418">
    <property type="term" value="P:protein localization to synapse"/>
    <property type="evidence" value="ECO:0000315"/>
    <property type="project" value="WormBase"/>
</dbReference>
<dbReference type="GO" id="GO:0007165">
    <property type="term" value="P:signal transduction"/>
    <property type="evidence" value="ECO:0000318"/>
    <property type="project" value="GO_Central"/>
</dbReference>
<dbReference type="GO" id="GO:0007416">
    <property type="term" value="P:synapse assembly"/>
    <property type="evidence" value="ECO:0000315"/>
    <property type="project" value="WormBase"/>
</dbReference>
<dbReference type="CDD" id="cd00063">
    <property type="entry name" value="FN3"/>
    <property type="match status" value="8"/>
</dbReference>
<dbReference type="CDD" id="cd14553">
    <property type="entry name" value="R-PTPc-LAR-1"/>
    <property type="match status" value="1"/>
</dbReference>
<dbReference type="FunFam" id="2.60.40.10:FF:002244">
    <property type="entry name" value="CBN-TWK-30 protein"/>
    <property type="match status" value="1"/>
</dbReference>
<dbReference type="FunFam" id="2.60.40.10:FF:000032">
    <property type="entry name" value="palladin isoform X1"/>
    <property type="match status" value="1"/>
</dbReference>
<dbReference type="FunFam" id="2.60.40.10:FF:002354">
    <property type="entry name" value="Protein-tyrosine-phosphatase"/>
    <property type="match status" value="1"/>
</dbReference>
<dbReference type="FunFam" id="2.60.40.10:FF:002423">
    <property type="entry name" value="Protein-tyrosine-phosphatase"/>
    <property type="match status" value="1"/>
</dbReference>
<dbReference type="FunFam" id="3.90.190.10:FF:000147">
    <property type="entry name" value="Protein-tyrosine-phosphatase"/>
    <property type="match status" value="1"/>
</dbReference>
<dbReference type="FunFam" id="3.90.190.10:FF:000102">
    <property type="entry name" value="Receptor-type tyrosine-protein phosphatase"/>
    <property type="match status" value="1"/>
</dbReference>
<dbReference type="FunFam" id="2.60.40.10:FF:000010">
    <property type="entry name" value="receptor-type tyrosine-protein phosphatase delta isoform X1"/>
    <property type="match status" value="1"/>
</dbReference>
<dbReference type="FunFam" id="2.60.40.10:FF:000036">
    <property type="entry name" value="receptor-type tyrosine-protein phosphatase delta isoform X1"/>
    <property type="match status" value="1"/>
</dbReference>
<dbReference type="FunFam" id="2.60.40.10:FF:002219">
    <property type="entry name" value="Tyrosine-protein phosphatase Lar-like"/>
    <property type="match status" value="1"/>
</dbReference>
<dbReference type="Gene3D" id="2.60.40.10">
    <property type="entry name" value="Immunoglobulins"/>
    <property type="match status" value="11"/>
</dbReference>
<dbReference type="Gene3D" id="3.90.190.10">
    <property type="entry name" value="Protein tyrosine phosphatase superfamily"/>
    <property type="match status" value="2"/>
</dbReference>
<dbReference type="InterPro" id="IPR003961">
    <property type="entry name" value="FN3_dom"/>
</dbReference>
<dbReference type="InterPro" id="IPR036116">
    <property type="entry name" value="FN3_sf"/>
</dbReference>
<dbReference type="InterPro" id="IPR007110">
    <property type="entry name" value="Ig-like_dom"/>
</dbReference>
<dbReference type="InterPro" id="IPR036179">
    <property type="entry name" value="Ig-like_dom_sf"/>
</dbReference>
<dbReference type="InterPro" id="IPR013783">
    <property type="entry name" value="Ig-like_fold"/>
</dbReference>
<dbReference type="InterPro" id="IPR013098">
    <property type="entry name" value="Ig_I-set"/>
</dbReference>
<dbReference type="InterPro" id="IPR003599">
    <property type="entry name" value="Ig_sub"/>
</dbReference>
<dbReference type="InterPro" id="IPR003598">
    <property type="entry name" value="Ig_sub2"/>
</dbReference>
<dbReference type="InterPro" id="IPR029021">
    <property type="entry name" value="Prot-tyrosine_phosphatase-like"/>
</dbReference>
<dbReference type="InterPro" id="IPR000242">
    <property type="entry name" value="PTP_cat"/>
</dbReference>
<dbReference type="InterPro" id="IPR050713">
    <property type="entry name" value="RTP_Phos/Ushers"/>
</dbReference>
<dbReference type="InterPro" id="IPR016130">
    <property type="entry name" value="Tyr_Pase_AS"/>
</dbReference>
<dbReference type="InterPro" id="IPR003595">
    <property type="entry name" value="Tyr_Pase_cat"/>
</dbReference>
<dbReference type="InterPro" id="IPR000387">
    <property type="entry name" value="Tyr_Pase_dom"/>
</dbReference>
<dbReference type="PANTHER" id="PTHR46957">
    <property type="entry name" value="CYTOKINE RECEPTOR"/>
    <property type="match status" value="1"/>
</dbReference>
<dbReference type="PANTHER" id="PTHR46957:SF6">
    <property type="entry name" value="PROTEIN-TYROSINE-PHOSPHATASE"/>
    <property type="match status" value="1"/>
</dbReference>
<dbReference type="Pfam" id="PF00041">
    <property type="entry name" value="fn3"/>
    <property type="match status" value="5"/>
</dbReference>
<dbReference type="Pfam" id="PF07679">
    <property type="entry name" value="I-set"/>
    <property type="match status" value="2"/>
</dbReference>
<dbReference type="Pfam" id="PF00102">
    <property type="entry name" value="Y_phosphatase"/>
    <property type="match status" value="2"/>
</dbReference>
<dbReference type="PRINTS" id="PR00014">
    <property type="entry name" value="FNTYPEIII"/>
</dbReference>
<dbReference type="PRINTS" id="PR00700">
    <property type="entry name" value="PRTYPHPHTASE"/>
</dbReference>
<dbReference type="SMART" id="SM00060">
    <property type="entry name" value="FN3"/>
    <property type="match status" value="9"/>
</dbReference>
<dbReference type="SMART" id="SM00409">
    <property type="entry name" value="IG"/>
    <property type="match status" value="3"/>
</dbReference>
<dbReference type="SMART" id="SM00408">
    <property type="entry name" value="IGc2"/>
    <property type="match status" value="3"/>
</dbReference>
<dbReference type="SMART" id="SM00194">
    <property type="entry name" value="PTPc"/>
    <property type="match status" value="2"/>
</dbReference>
<dbReference type="SMART" id="SM00404">
    <property type="entry name" value="PTPc_motif"/>
    <property type="match status" value="2"/>
</dbReference>
<dbReference type="SUPFAM" id="SSF52799">
    <property type="entry name" value="(Phosphotyrosine protein) phosphatases II"/>
    <property type="match status" value="2"/>
</dbReference>
<dbReference type="SUPFAM" id="SSF49265">
    <property type="entry name" value="Fibronectin type III"/>
    <property type="match status" value="6"/>
</dbReference>
<dbReference type="SUPFAM" id="SSF48726">
    <property type="entry name" value="Immunoglobulin"/>
    <property type="match status" value="3"/>
</dbReference>
<dbReference type="PROSITE" id="PS50853">
    <property type="entry name" value="FN3"/>
    <property type="match status" value="9"/>
</dbReference>
<dbReference type="PROSITE" id="PS50835">
    <property type="entry name" value="IG_LIKE"/>
    <property type="match status" value="3"/>
</dbReference>
<dbReference type="PROSITE" id="PS00383">
    <property type="entry name" value="TYR_PHOSPHATASE_1"/>
    <property type="match status" value="1"/>
</dbReference>
<dbReference type="PROSITE" id="PS50056">
    <property type="entry name" value="TYR_PHOSPHATASE_2"/>
    <property type="match status" value="2"/>
</dbReference>
<dbReference type="PROSITE" id="PS50055">
    <property type="entry name" value="TYR_PHOSPHATASE_PTP"/>
    <property type="match status" value="2"/>
</dbReference>
<sequence>MIQFRNKNNSMNRIARHLRNVARRKGSSLLLFLMLSTVLVAAKEDDPARLVVRPDSSTVVDESKISFFCRADGNPLPSVIWRVNGKSITDHNRISIKSLATGLSTLRFERVSLDDNATVVSCSADNGVANPVVAEASLTVVPRDKVPIGFPQIELHPSLKSVEQGKTAYVSCRVRGDPRAKVLWLRDLIPLDIRADGRYSVSTIGNPGALMIQHAREEDQGKYECIARNTLGVAHSKAANLYVKVRRVPPYFSYKLERQYVVGVGGNINLTCVAVGYPMPRVFWKKTDLMVLDDPSTAPIGKNVLTLTHVESTENFTCVAVSALGNIEATTTVIAKELPPPPVNIVVSSVTSESVVITWKPPKYNEAINKYVVNYRLKYSEGRSSRGKTMETLENSLVIDGLVAFQTYEFTVRSAGPVGVGLESLPVEAQTKPSKPATAPVSPQARSLNRDSILVKWGPCEQPNGLITGYKVYYTNDLVTTPIREWKQHDAKSDEFMTTINGLEPDSRYFVRVIAQNSEGDSPLSTLVTVATRQGIPGQPPMLTVKALDSRRMQLTWDKPLYSSPVVGYTVRYNTSDGEKELTLTSPHEKHVVTGLHPDKYYYFRVAAYSDRGQGEFTEPMISKTIASIPLSSPTIVSAAATSSKSVEIRWKGPEQKKLNGVLTAYRINYFRLEDSKTANLESVEYDEDMDDSSSFLDRMSVVVPSDATSYVLSDLLPYSSYEITVAASTMDGYGPESSIRVVKTLEDVPSAPRNFNAELTSATSVKLTWDAPAAANGALLGYYVYLDRMVNGEPVVEKGSKKRIVMIRDSSKRYFELDSLDPNTEYSFRLNAFNRNGDGEFSERKSIITQGIPPEAPEIVSVSLDRDEPPVVARIEWKMPKMKPNETPIEKYNLWLRAQGYPDSYVKAKTVDGTDLSTTISGLWMGVVYDVLLAAENREGRSQNATETIATPVGSPDGEPIDVQYEVMKGKIVVSWRPPSEEKRNGNITSYKAILSAMDATADRYEQPVPAPSTSSTFEVNVRRAYLFKVAAATMKGIGPYSPVLTINPDPAALVGPPTNVRVEATSNSTAVVQWDFESQKADSFVVKYMHEPGNRMDTEKWKQLPVVSIDKENPKRFAVVSDLNAHKPYAFCVLAVKNNLTLNEQFNKVRVTNYMTNFQRQGPCSDPPTVLESVTPTYMVQNLRVLWKTSNSVQLTWEYNGPRNVGFYVNHTGRKDYVNHELQEKTMSTPGFGQDVDEKHREYLWTNLRPHMMYTIHVGVRTLPPGARKYWPQEVVTITDPTGPPFVDVPKLVDSSGTQPGQQMIRLTPATEEYGPISHYWIILVPANYSTEDVVNLDPIELEKATAEKRAQLARSLSVSPSKKLKRKASEVGDDSQSASYHPKEKRARRATVPGAYVTARLSADRVKQQYRNNQPFIVGDSQLYDGFTNYPLEHNLHYRLMMRAFAKNDVRTKDSFEQRAPMSEKLSRMYSDSVLTEPFTIKSALRGASQKSSPWVGACIAFLVLFSIVGMLICWWLRCNKKSAGRHPRHGSITKVALTGNIMNGGGGIPGETSKLLSTSNEYGRQIMNPYEQMNGNHHMESSMDLYPLPTSHSRSNGYAPVPVAIPSLPNNGNNMTTVSHPAVPIAELANHIERLRMNNNAGFQSEFESIETGQHFTWEHSSADMNKHKNRYANVAAYDHSRVVLSNVEGYPGMDYINANYVDGYDKPRSYIATQGPLPETFSDFWRMVWEEQSVTIVMLTNLEERSRVKCDQYWPSRGTATYGDIEVTLLESVHLAHYTMRTMRLKMVGEPEVREIKHLQYTAWPDHGVPDHPTPFLIFLKRVKTLNPNDAGPIISHCSAGIGRTGAFIVIDCMLERLRYDNTVDIYGCVTALRAQRSYMVQTEEQYIFIHDAVLDAVNSGSTEVPASRLHQHLHILSQPSADQLSGIDMEFRHLTTLKWTSNRCTVANLPVNRPKNRMLSAVPYDSNRVIMRLLPGADGSDYINASWIDGYKERGAYIATQAPTNETAADFWRAIWEHNSPIIAMLVRTNERGQEQCSDYWPLETGVQVGMLVVEPMAEYDMKHYHLREFRISDINTREVRTVRQFHFMEWPDVGKPHTADHFLDFVTQVHNTYAQFGCTGPITVHCCSGAGRTAVFIALSIILDRMRAEHVVDVFTTVKLLRTERQNMIQEPEQYHFLYLAAYEYLAAYDNFS</sequence>
<protein>
    <recommendedName>
        <fullName>Tyrosine-protein phosphatase Lar-like</fullName>
        <ecNumber>3.1.3.48</ecNumber>
    </recommendedName>
    <alternativeName>
        <fullName>Protein-tyrosine phosphate 3</fullName>
    </alternativeName>
</protein>
<evidence type="ECO:0000250" key="1"/>
<evidence type="ECO:0000250" key="2">
    <source>
        <dbReference type="UniProtKB" id="P16621"/>
    </source>
</evidence>
<evidence type="ECO:0000255" key="3"/>
<evidence type="ECO:0000255" key="4">
    <source>
        <dbReference type="PROSITE-ProRule" id="PRU00114"/>
    </source>
</evidence>
<evidence type="ECO:0000255" key="5">
    <source>
        <dbReference type="PROSITE-ProRule" id="PRU00160"/>
    </source>
</evidence>
<evidence type="ECO:0000255" key="6">
    <source>
        <dbReference type="PROSITE-ProRule" id="PRU00316"/>
    </source>
</evidence>
<evidence type="ECO:0000255" key="7">
    <source>
        <dbReference type="PROSITE-ProRule" id="PRU10044"/>
    </source>
</evidence>
<evidence type="ECO:0000256" key="8">
    <source>
        <dbReference type="SAM" id="MobiDB-lite"/>
    </source>
</evidence>
<evidence type="ECO:0000269" key="9">
    <source>
    </source>
</evidence>
<evidence type="ECO:0000269" key="10">
    <source>
    </source>
</evidence>
<evidence type="ECO:0000303" key="11">
    <source>
    </source>
</evidence>
<evidence type="ECO:0000305" key="12"/>
<evidence type="ECO:0000312" key="13">
    <source>
        <dbReference type="EMBL" id="AAK01632.1"/>
    </source>
</evidence>
<reference evidence="12" key="1">
    <citation type="journal article" date="2002" name="Development">
        <title>The C. elegans LAR-like receptor tyrosine phosphatase PTP-3 and the VAB-1 Eph receptor tyrosine kinase have partly redundant functions in morphogenesis.</title>
        <authorList>
            <person name="Harrington R.J."/>
            <person name="Gutch M.J."/>
            <person name="Hengartner M.O."/>
            <person name="Tonks N.K."/>
            <person name="Chisholm A.D."/>
        </authorList>
    </citation>
    <scope>NUCLEOTIDE SEQUENCE [MRNA] (ISOFORMS A AND B)</scope>
    <scope>FUNCTION</scope>
    <scope>ALTERNATIVE SPLICING</scope>
    <source>
        <strain>Bristol N2</strain>
    </source>
</reference>
<reference key="2">
    <citation type="journal article" date="1998" name="Science">
        <title>Genome sequence of the nematode C. elegans: a platform for investigating biology.</title>
        <authorList>
            <consortium name="The C. elegans sequencing consortium"/>
        </authorList>
    </citation>
    <scope>NUCLEOTIDE SEQUENCE [LARGE SCALE GENOMIC DNA]</scope>
    <source>
        <strain>Bristol N2</strain>
    </source>
</reference>
<reference key="3">
    <citation type="journal article" date="2007" name="Mol. Cell. Proteomics">
        <title>Proteomics reveals N-linked glycoprotein diversity in Caenorhabditis elegans and suggests an atypical translocation mechanism for integral membrane proteins.</title>
        <authorList>
            <person name="Kaji H."/>
            <person name="Kamiie J."/>
            <person name="Kawakami H."/>
            <person name="Kido K."/>
            <person name="Yamauchi Y."/>
            <person name="Shinkawa T."/>
            <person name="Taoka M."/>
            <person name="Takahashi N."/>
            <person name="Isobe T."/>
        </authorList>
    </citation>
    <scope>GLYCOSYLATION [LARGE SCALE ANALYSIS] AT ASN-574 AND ASN-1212</scope>
    <scope>IDENTIFICATION BY MASS SPECTROMETRY</scope>
    <source>
        <strain>Bristol N2</strain>
    </source>
</reference>
<proteinExistence type="evidence at protein level"/>
<feature type="signal peptide" evidence="3">
    <location>
        <begin position="1"/>
        <end position="42"/>
    </location>
</feature>
<feature type="chain" id="PRO_0000025430" description="Tyrosine-protein phosphatase Lar-like">
    <location>
        <begin position="43"/>
        <end position="2200"/>
    </location>
</feature>
<feature type="topological domain" description="Extracellular" evidence="3">
    <location>
        <begin position="43"/>
        <end position="1497"/>
    </location>
</feature>
<feature type="transmembrane region" description="Helical" evidence="3">
    <location>
        <begin position="1498"/>
        <end position="1518"/>
    </location>
</feature>
<feature type="topological domain" description="Cytoplasmic" evidence="3">
    <location>
        <begin position="1519"/>
        <end position="2200"/>
    </location>
</feature>
<feature type="domain" description="Ig-like C2-type 1">
    <location>
        <begin position="47"/>
        <end position="139"/>
    </location>
</feature>
<feature type="domain" description="Ig-like C2-type 2">
    <location>
        <begin position="151"/>
        <end position="240"/>
    </location>
</feature>
<feature type="domain" description="Ig-like C2-type 3">
    <location>
        <begin position="250"/>
        <end position="334"/>
    </location>
</feature>
<feature type="domain" description="Fibronectin type-III 1" evidence="6">
    <location>
        <begin position="341"/>
        <end position="434"/>
    </location>
</feature>
<feature type="domain" description="Fibronectin type-III 2" evidence="6">
    <location>
        <begin position="439"/>
        <end position="535"/>
    </location>
</feature>
<feature type="domain" description="Fibronectin type-III 3" evidence="6">
    <location>
        <begin position="539"/>
        <end position="628"/>
    </location>
</feature>
<feature type="domain" description="Fibronectin type-III 4" evidence="6">
    <location>
        <begin position="633"/>
        <end position="748"/>
    </location>
</feature>
<feature type="domain" description="Fibronectin type-III 5" evidence="6">
    <location>
        <begin position="752"/>
        <end position="856"/>
    </location>
</feature>
<feature type="domain" description="Fibronectin type-III 6" evidence="6">
    <location>
        <begin position="857"/>
        <end position="956"/>
    </location>
</feature>
<feature type="domain" description="Fibronectin type-III 7" evidence="6">
    <location>
        <begin position="957"/>
        <end position="1053"/>
    </location>
</feature>
<feature type="domain" description="Fibronectin type-III 8" evidence="6">
    <location>
        <begin position="1058"/>
        <end position="1158"/>
    </location>
</feature>
<feature type="domain" description="Fibronectin type-III 9" evidence="6">
    <location>
        <begin position="1181"/>
        <end position="1287"/>
    </location>
</feature>
<feature type="domain" description="Tyrosine-protein phosphatase 1" evidence="5">
    <location>
        <begin position="1647"/>
        <end position="1902"/>
    </location>
</feature>
<feature type="domain" description="Tyrosine-protein phosphatase 2" evidence="5">
    <location>
        <begin position="1933"/>
        <end position="2192"/>
    </location>
</feature>
<feature type="region of interest" description="Disordered" evidence="8">
    <location>
        <begin position="1355"/>
        <end position="1392"/>
    </location>
</feature>
<feature type="active site" description="Phosphocysteine intermediate" evidence="1">
    <location>
        <position position="1843"/>
    </location>
</feature>
<feature type="active site" description="Phosphocysteine intermediate" evidence="1">
    <location>
        <position position="2133"/>
    </location>
</feature>
<feature type="binding site" evidence="1">
    <location>
        <position position="1811"/>
    </location>
    <ligand>
        <name>substrate</name>
    </ligand>
</feature>
<feature type="binding site" evidence="1">
    <location>
        <begin position="1843"/>
        <end position="1849"/>
    </location>
    <ligand>
        <name>substrate</name>
    </ligand>
</feature>
<feature type="binding site" evidence="1">
    <location>
        <position position="1887"/>
    </location>
    <ligand>
        <name>substrate</name>
    </ligand>
</feature>
<feature type="glycosylation site" description="N-linked (GlcNAc...) asparagine" evidence="3">
    <location>
        <position position="8"/>
    </location>
</feature>
<feature type="glycosylation site" description="N-linked (GlcNAc...) asparagine" evidence="3">
    <location>
        <position position="116"/>
    </location>
</feature>
<feature type="glycosylation site" description="N-linked (GlcNAc...) asparagine" evidence="3">
    <location>
        <position position="269"/>
    </location>
</feature>
<feature type="glycosylation site" description="N-linked (GlcNAc...) asparagine" evidence="3">
    <location>
        <position position="315"/>
    </location>
</feature>
<feature type="glycosylation site" description="N-linked (GlcNAc...) asparagine" evidence="10">
    <location>
        <position position="574"/>
    </location>
</feature>
<feature type="glycosylation site" description="N-linked (GlcNAc...) asparagine" evidence="3">
    <location>
        <position position="945"/>
    </location>
</feature>
<feature type="glycosylation site" description="N-linked (GlcNAc...) asparagine" evidence="3">
    <location>
        <position position="988"/>
    </location>
</feature>
<feature type="glycosylation site" description="N-linked (GlcNAc...) asparagine" evidence="3">
    <location>
        <position position="1069"/>
    </location>
</feature>
<feature type="glycosylation site" description="N-linked (GlcNAc...) asparagine" evidence="3">
    <location>
        <position position="1141"/>
    </location>
</feature>
<feature type="glycosylation site" description="N-linked (GlcNAc...) asparagine" evidence="10">
    <location>
        <position position="1212"/>
    </location>
</feature>
<feature type="glycosylation site" description="N-linked (GlcNAc...) asparagine" evidence="3">
    <location>
        <position position="1330"/>
    </location>
</feature>
<feature type="disulfide bond" evidence="2 4">
    <location>
        <begin position="69"/>
        <end position="122"/>
    </location>
</feature>
<feature type="disulfide bond" evidence="2 4">
    <location>
        <begin position="172"/>
        <end position="225"/>
    </location>
</feature>
<feature type="disulfide bond" evidence="2 4">
    <location>
        <begin position="272"/>
        <end position="318"/>
    </location>
</feature>
<feature type="splice variant" id="VSP_007007" description="In isoform b." evidence="11">
    <location>
        <begin position="1"/>
        <end position="713"/>
    </location>
</feature>
<feature type="splice variant" id="VSP_007008" description="In isoform b." evidence="11">
    <original>SDLLPYSSYEITVAASTMDGYGPESSIRVVKTLED</original>
    <variation>MGTPATTIAAINNNFRKFFILFLLLLAPTCRGQQK</variation>
    <location>
        <begin position="714"/>
        <end position="748"/>
    </location>
</feature>
<name>LAR_CAEEL</name>
<keyword id="KW-0025">Alternative splicing</keyword>
<keyword id="KW-0965">Cell junction</keyword>
<keyword id="KW-1003">Cell membrane</keyword>
<keyword id="KW-1015">Disulfide bond</keyword>
<keyword id="KW-0325">Glycoprotein</keyword>
<keyword id="KW-0378">Hydrolase</keyword>
<keyword id="KW-0393">Immunoglobulin domain</keyword>
<keyword id="KW-0472">Membrane</keyword>
<keyword id="KW-0904">Protein phosphatase</keyword>
<keyword id="KW-0675">Receptor</keyword>
<keyword id="KW-1185">Reference proteome</keyword>
<keyword id="KW-0677">Repeat</keyword>
<keyword id="KW-0732">Signal</keyword>
<keyword id="KW-0812">Transmembrane</keyword>
<keyword id="KW-1133">Transmembrane helix</keyword>
<organism evidence="13">
    <name type="scientific">Caenorhabditis elegans</name>
    <dbReference type="NCBI Taxonomy" id="6239"/>
    <lineage>
        <taxon>Eukaryota</taxon>
        <taxon>Metazoa</taxon>
        <taxon>Ecdysozoa</taxon>
        <taxon>Nematoda</taxon>
        <taxon>Chromadorea</taxon>
        <taxon>Rhabditida</taxon>
        <taxon>Rhabditina</taxon>
        <taxon>Rhabditomorpha</taxon>
        <taxon>Rhabditoidea</taxon>
        <taxon>Rhabditidae</taxon>
        <taxon>Peloderinae</taxon>
        <taxon>Caenorhabditis</taxon>
    </lineage>
</organism>
<gene>
    <name type="primary">ptp-3</name>
    <name type="ORF">C09D8.1/C09D8.2</name>
</gene>
<accession>Q9BMN8</accession>
<accession>Q09434</accession>
<accession>Q17859</accession>
<accession>Q20137</accession>
<accession>Q9BMN7</accession>